<reference key="1">
    <citation type="submission" date="2003-10" db="EMBL/GenBank/DDBJ databases">
        <title>The complete genome sequence of the alkaliphilic Bacillus clausii KSM-K16.</title>
        <authorList>
            <person name="Takaki Y."/>
            <person name="Kageyama Y."/>
            <person name="Shimamura S."/>
            <person name="Suzuki H."/>
            <person name="Nishi S."/>
            <person name="Hatada Y."/>
            <person name="Kawai S."/>
            <person name="Ito S."/>
            <person name="Horikoshi K."/>
        </authorList>
    </citation>
    <scope>NUCLEOTIDE SEQUENCE [LARGE SCALE GENOMIC DNA]</scope>
    <source>
        <strain>KSM-K16</strain>
    </source>
</reference>
<keyword id="KW-0131">Cell cycle</keyword>
<keyword id="KW-0132">Cell division</keyword>
<keyword id="KW-0238">DNA-binding</keyword>
<keyword id="KW-1185">Reference proteome</keyword>
<comment type="function">
    <text evidence="1">Involved in cell division and chromosome segregation.</text>
</comment>
<comment type="similarity">
    <text evidence="1">Belongs to the WhiA family.</text>
</comment>
<evidence type="ECO:0000255" key="1">
    <source>
        <dbReference type="HAMAP-Rule" id="MF_01420"/>
    </source>
</evidence>
<proteinExistence type="inferred from homology"/>
<feature type="chain" id="PRO_0000376438" description="Probable cell division protein WhiA">
    <location>
        <begin position="1"/>
        <end position="324"/>
    </location>
</feature>
<feature type="DNA-binding region" description="H-T-H motif" evidence="1">
    <location>
        <begin position="276"/>
        <end position="310"/>
    </location>
</feature>
<gene>
    <name evidence="1" type="primary">whiA</name>
    <name type="ordered locus">ABC3034</name>
</gene>
<accession>Q5WDJ2</accession>
<organism>
    <name type="scientific">Shouchella clausii (strain KSM-K16)</name>
    <name type="common">Alkalihalobacillus clausii</name>
    <dbReference type="NCBI Taxonomy" id="66692"/>
    <lineage>
        <taxon>Bacteria</taxon>
        <taxon>Bacillati</taxon>
        <taxon>Bacillota</taxon>
        <taxon>Bacilli</taxon>
        <taxon>Bacillales</taxon>
        <taxon>Bacillaceae</taxon>
        <taxon>Shouchella</taxon>
    </lineage>
</organism>
<dbReference type="EMBL" id="AP006627">
    <property type="protein sequence ID" value="BAD65568.1"/>
    <property type="molecule type" value="Genomic_DNA"/>
</dbReference>
<dbReference type="RefSeq" id="WP_011247876.1">
    <property type="nucleotide sequence ID" value="NC_006582.1"/>
</dbReference>
<dbReference type="SMR" id="Q5WDJ2"/>
<dbReference type="STRING" id="66692.ABC3034"/>
<dbReference type="GeneID" id="86927237"/>
<dbReference type="KEGG" id="bcl:ABC3034"/>
<dbReference type="eggNOG" id="COG1481">
    <property type="taxonomic scope" value="Bacteria"/>
</dbReference>
<dbReference type="HOGENOM" id="CLU_053282_0_0_9"/>
<dbReference type="OrthoDB" id="401278at2"/>
<dbReference type="Proteomes" id="UP000001168">
    <property type="component" value="Chromosome"/>
</dbReference>
<dbReference type="GO" id="GO:0003677">
    <property type="term" value="F:DNA binding"/>
    <property type="evidence" value="ECO:0007669"/>
    <property type="project" value="UniProtKB-UniRule"/>
</dbReference>
<dbReference type="GO" id="GO:0051301">
    <property type="term" value="P:cell division"/>
    <property type="evidence" value="ECO:0007669"/>
    <property type="project" value="UniProtKB-UniRule"/>
</dbReference>
<dbReference type="GO" id="GO:0043937">
    <property type="term" value="P:regulation of sporulation"/>
    <property type="evidence" value="ECO:0007669"/>
    <property type="project" value="InterPro"/>
</dbReference>
<dbReference type="FunFam" id="3.10.28.10:FF:000002">
    <property type="entry name" value="Probable cell division protein WhiA"/>
    <property type="match status" value="1"/>
</dbReference>
<dbReference type="Gene3D" id="3.10.28.10">
    <property type="entry name" value="Homing endonucleases"/>
    <property type="match status" value="1"/>
</dbReference>
<dbReference type="HAMAP" id="MF_01420">
    <property type="entry name" value="HTH_type_WhiA"/>
    <property type="match status" value="1"/>
</dbReference>
<dbReference type="InterPro" id="IPR027434">
    <property type="entry name" value="Homing_endonucl"/>
</dbReference>
<dbReference type="InterPro" id="IPR018478">
    <property type="entry name" value="Sporu_reg_WhiA_N_dom"/>
</dbReference>
<dbReference type="InterPro" id="IPR003802">
    <property type="entry name" value="Sporulation_regulator_WhiA"/>
</dbReference>
<dbReference type="InterPro" id="IPR023054">
    <property type="entry name" value="Sporulation_regulator_WhiA_C"/>
</dbReference>
<dbReference type="InterPro" id="IPR039518">
    <property type="entry name" value="WhiA_LAGLIDADG_dom"/>
</dbReference>
<dbReference type="NCBIfam" id="TIGR00647">
    <property type="entry name" value="DNA_bind_WhiA"/>
    <property type="match status" value="1"/>
</dbReference>
<dbReference type="PANTHER" id="PTHR37307">
    <property type="entry name" value="CELL DIVISION PROTEIN WHIA-RELATED"/>
    <property type="match status" value="1"/>
</dbReference>
<dbReference type="PANTHER" id="PTHR37307:SF1">
    <property type="entry name" value="CELL DIVISION PROTEIN WHIA-RELATED"/>
    <property type="match status" value="1"/>
</dbReference>
<dbReference type="Pfam" id="PF02650">
    <property type="entry name" value="HTH_WhiA"/>
    <property type="match status" value="1"/>
</dbReference>
<dbReference type="Pfam" id="PF14527">
    <property type="entry name" value="LAGLIDADG_WhiA"/>
    <property type="match status" value="1"/>
</dbReference>
<dbReference type="Pfam" id="PF10298">
    <property type="entry name" value="WhiA_N"/>
    <property type="match status" value="1"/>
</dbReference>
<dbReference type="SUPFAM" id="SSF55608">
    <property type="entry name" value="Homing endonucleases"/>
    <property type="match status" value="1"/>
</dbReference>
<sequence>MSFAANAKKELTQLELVSCCARAELSALIRMNGSLSLGNKQVGLDVTTENAAIARRIYTLIKHLYPNIHIELLVQKKMRLKKNNVYMVRISKEARQLLEDLRILNGSFQFIRDISPEIVKESCCKRAYLRGAFLAGGSINHPETSSYHLEIFSLYEEHNQAICELMNGFSLSAKTLERKKGFITYLKESEKITEFLNIIGAHQALLYFEDVRIMKDMRNSVNRLVNCETANLNKTVGAALRQVENIRFIDKTIGLENLPPKLQEVAKLRVKHQDVTLKELGEMMQGGKVSKSGINHRLRKIDEFADKLRNGTFDAKKLNTHRGK</sequence>
<protein>
    <recommendedName>
        <fullName evidence="1">Probable cell division protein WhiA</fullName>
    </recommendedName>
</protein>
<name>WHIA_SHOC1</name>